<protein>
    <recommendedName>
        <fullName evidence="1">Phosphoglycerate kinase</fullName>
        <ecNumber evidence="1">2.7.2.3</ecNumber>
    </recommendedName>
</protein>
<sequence length="387" mass="40019">MTVLKMTDLDLQGKRVLIREDLNVPVKDGVVASDARILAALPTIKLALEKGAAVMVCSHLGRPTEGEFSAENSLKPVADYLSKALGRDVPLVADYLDGVAVQAGELVLFENVRFNKGEKKNADELAQKYAALCDVFVMDAFGTAHRAEGSTHGVAKFAKVAAAGPLLAAELDALGKALKAPAKPMAAIVAGSKVSTKLDVLNSLSSVCDQLIVGGGIANTFLAAAGHPVGKSLYEPDLVDTAKAIAAKVSVPLPVDVVVAKEFAETAEATVKAIADVAADDMILDIGPQTAANFAELLKSSKTILWNGPVGVFEFDQFGNGTKVLAKAIADSAAFSIAGGGDTLAAIDKYGVSKEISYISTGGGAFLEFVEGKVLPAVAILEERAKA</sequence>
<comment type="catalytic activity">
    <reaction evidence="1">
        <text>(2R)-3-phosphoglycerate + ATP = (2R)-3-phospho-glyceroyl phosphate + ADP</text>
        <dbReference type="Rhea" id="RHEA:14801"/>
        <dbReference type="ChEBI" id="CHEBI:30616"/>
        <dbReference type="ChEBI" id="CHEBI:57604"/>
        <dbReference type="ChEBI" id="CHEBI:58272"/>
        <dbReference type="ChEBI" id="CHEBI:456216"/>
        <dbReference type="EC" id="2.7.2.3"/>
    </reaction>
</comment>
<comment type="pathway">
    <text evidence="1">Carbohydrate degradation; glycolysis; pyruvate from D-glyceraldehyde 3-phosphate: step 2/5.</text>
</comment>
<comment type="subunit">
    <text evidence="1">Monomer.</text>
</comment>
<comment type="subcellular location">
    <subcellularLocation>
        <location evidence="1">Cytoplasm</location>
    </subcellularLocation>
</comment>
<comment type="similarity">
    <text evidence="1">Belongs to the phosphoglycerate kinase family.</text>
</comment>
<name>PGK_PSEP1</name>
<dbReference type="EC" id="2.7.2.3" evidence="1"/>
<dbReference type="EMBL" id="CP000712">
    <property type="protein sequence ID" value="ABQ80956.1"/>
    <property type="molecule type" value="Genomic_DNA"/>
</dbReference>
<dbReference type="SMR" id="A5W9Z6"/>
<dbReference type="KEGG" id="ppf:Pput_4836"/>
<dbReference type="eggNOG" id="COG0126">
    <property type="taxonomic scope" value="Bacteria"/>
</dbReference>
<dbReference type="HOGENOM" id="CLU_025427_0_2_6"/>
<dbReference type="UniPathway" id="UPA00109">
    <property type="reaction ID" value="UER00185"/>
</dbReference>
<dbReference type="GO" id="GO:0005829">
    <property type="term" value="C:cytosol"/>
    <property type="evidence" value="ECO:0007669"/>
    <property type="project" value="TreeGrafter"/>
</dbReference>
<dbReference type="GO" id="GO:0043531">
    <property type="term" value="F:ADP binding"/>
    <property type="evidence" value="ECO:0007669"/>
    <property type="project" value="TreeGrafter"/>
</dbReference>
<dbReference type="GO" id="GO:0005524">
    <property type="term" value="F:ATP binding"/>
    <property type="evidence" value="ECO:0007669"/>
    <property type="project" value="UniProtKB-KW"/>
</dbReference>
<dbReference type="GO" id="GO:0004618">
    <property type="term" value="F:phosphoglycerate kinase activity"/>
    <property type="evidence" value="ECO:0007669"/>
    <property type="project" value="UniProtKB-UniRule"/>
</dbReference>
<dbReference type="GO" id="GO:0006094">
    <property type="term" value="P:gluconeogenesis"/>
    <property type="evidence" value="ECO:0007669"/>
    <property type="project" value="TreeGrafter"/>
</dbReference>
<dbReference type="GO" id="GO:0006096">
    <property type="term" value="P:glycolytic process"/>
    <property type="evidence" value="ECO:0007669"/>
    <property type="project" value="UniProtKB-UniRule"/>
</dbReference>
<dbReference type="FunFam" id="3.40.50.1260:FF:000001">
    <property type="entry name" value="Phosphoglycerate kinase"/>
    <property type="match status" value="1"/>
</dbReference>
<dbReference type="FunFam" id="3.40.50.1260:FF:000002">
    <property type="entry name" value="Phosphoglycerate kinase"/>
    <property type="match status" value="1"/>
</dbReference>
<dbReference type="Gene3D" id="3.40.50.1260">
    <property type="entry name" value="Phosphoglycerate kinase, N-terminal domain"/>
    <property type="match status" value="2"/>
</dbReference>
<dbReference type="HAMAP" id="MF_00145">
    <property type="entry name" value="Phosphoglyc_kinase"/>
    <property type="match status" value="1"/>
</dbReference>
<dbReference type="InterPro" id="IPR001576">
    <property type="entry name" value="Phosphoglycerate_kinase"/>
</dbReference>
<dbReference type="InterPro" id="IPR015911">
    <property type="entry name" value="Phosphoglycerate_kinase_CS"/>
</dbReference>
<dbReference type="InterPro" id="IPR015824">
    <property type="entry name" value="Phosphoglycerate_kinase_N"/>
</dbReference>
<dbReference type="InterPro" id="IPR036043">
    <property type="entry name" value="Phosphoglycerate_kinase_sf"/>
</dbReference>
<dbReference type="PANTHER" id="PTHR11406">
    <property type="entry name" value="PHOSPHOGLYCERATE KINASE"/>
    <property type="match status" value="1"/>
</dbReference>
<dbReference type="PANTHER" id="PTHR11406:SF23">
    <property type="entry name" value="PHOSPHOGLYCERATE KINASE 1, CHLOROPLASTIC-RELATED"/>
    <property type="match status" value="1"/>
</dbReference>
<dbReference type="Pfam" id="PF00162">
    <property type="entry name" value="PGK"/>
    <property type="match status" value="1"/>
</dbReference>
<dbReference type="PIRSF" id="PIRSF000724">
    <property type="entry name" value="Pgk"/>
    <property type="match status" value="1"/>
</dbReference>
<dbReference type="PRINTS" id="PR00477">
    <property type="entry name" value="PHGLYCKINASE"/>
</dbReference>
<dbReference type="SUPFAM" id="SSF53748">
    <property type="entry name" value="Phosphoglycerate kinase"/>
    <property type="match status" value="1"/>
</dbReference>
<dbReference type="PROSITE" id="PS00111">
    <property type="entry name" value="PGLYCERATE_KINASE"/>
    <property type="match status" value="1"/>
</dbReference>
<evidence type="ECO:0000255" key="1">
    <source>
        <dbReference type="HAMAP-Rule" id="MF_00145"/>
    </source>
</evidence>
<feature type="chain" id="PRO_1000058041" description="Phosphoglycerate kinase">
    <location>
        <begin position="1"/>
        <end position="387"/>
    </location>
</feature>
<feature type="binding site" evidence="1">
    <location>
        <begin position="21"/>
        <end position="23"/>
    </location>
    <ligand>
        <name>substrate</name>
    </ligand>
</feature>
<feature type="binding site" evidence="1">
    <location>
        <position position="36"/>
    </location>
    <ligand>
        <name>substrate</name>
    </ligand>
</feature>
<feature type="binding site" evidence="1">
    <location>
        <begin position="59"/>
        <end position="62"/>
    </location>
    <ligand>
        <name>substrate</name>
    </ligand>
</feature>
<feature type="binding site" evidence="1">
    <location>
        <position position="113"/>
    </location>
    <ligand>
        <name>substrate</name>
    </ligand>
</feature>
<feature type="binding site" evidence="1">
    <location>
        <position position="146"/>
    </location>
    <ligand>
        <name>substrate</name>
    </ligand>
</feature>
<feature type="binding site" evidence="1">
    <location>
        <position position="197"/>
    </location>
    <ligand>
        <name>ATP</name>
        <dbReference type="ChEBI" id="CHEBI:30616"/>
    </ligand>
</feature>
<feature type="binding site" evidence="1">
    <location>
        <position position="314"/>
    </location>
    <ligand>
        <name>ATP</name>
        <dbReference type="ChEBI" id="CHEBI:30616"/>
    </ligand>
</feature>
<feature type="binding site" evidence="1">
    <location>
        <begin position="340"/>
        <end position="343"/>
    </location>
    <ligand>
        <name>ATP</name>
        <dbReference type="ChEBI" id="CHEBI:30616"/>
    </ligand>
</feature>
<keyword id="KW-0067">ATP-binding</keyword>
<keyword id="KW-0963">Cytoplasm</keyword>
<keyword id="KW-0324">Glycolysis</keyword>
<keyword id="KW-0418">Kinase</keyword>
<keyword id="KW-0547">Nucleotide-binding</keyword>
<keyword id="KW-0808">Transferase</keyword>
<reference key="1">
    <citation type="submission" date="2007-05" db="EMBL/GenBank/DDBJ databases">
        <title>Complete sequence of Pseudomonas putida F1.</title>
        <authorList>
            <consortium name="US DOE Joint Genome Institute"/>
            <person name="Copeland A."/>
            <person name="Lucas S."/>
            <person name="Lapidus A."/>
            <person name="Barry K."/>
            <person name="Detter J.C."/>
            <person name="Glavina del Rio T."/>
            <person name="Hammon N."/>
            <person name="Israni S."/>
            <person name="Dalin E."/>
            <person name="Tice H."/>
            <person name="Pitluck S."/>
            <person name="Chain P."/>
            <person name="Malfatti S."/>
            <person name="Shin M."/>
            <person name="Vergez L."/>
            <person name="Schmutz J."/>
            <person name="Larimer F."/>
            <person name="Land M."/>
            <person name="Hauser L."/>
            <person name="Kyrpides N."/>
            <person name="Lykidis A."/>
            <person name="Parales R."/>
            <person name="Richardson P."/>
        </authorList>
    </citation>
    <scope>NUCLEOTIDE SEQUENCE [LARGE SCALE GENOMIC DNA]</scope>
    <source>
        <strain>ATCC 700007 / DSM 6899 / JCM 31910 / BCRC 17059 / LMG 24140 / F1</strain>
    </source>
</reference>
<organism>
    <name type="scientific">Pseudomonas putida (strain ATCC 700007 / DSM 6899 / JCM 31910 / BCRC 17059 / LMG 24140 / F1)</name>
    <dbReference type="NCBI Taxonomy" id="351746"/>
    <lineage>
        <taxon>Bacteria</taxon>
        <taxon>Pseudomonadati</taxon>
        <taxon>Pseudomonadota</taxon>
        <taxon>Gammaproteobacteria</taxon>
        <taxon>Pseudomonadales</taxon>
        <taxon>Pseudomonadaceae</taxon>
        <taxon>Pseudomonas</taxon>
    </lineage>
</organism>
<proteinExistence type="inferred from homology"/>
<accession>A5W9Z6</accession>
<gene>
    <name evidence="1" type="primary">pgk</name>
    <name type="ordered locus">Pput_4836</name>
</gene>